<dbReference type="EC" id="3.6.5.3" evidence="2"/>
<dbReference type="EMBL" id="AM406670">
    <property type="protein sequence ID" value="CAL96035.1"/>
    <property type="molecule type" value="Genomic_DNA"/>
</dbReference>
<dbReference type="EMBL" id="AM406670">
    <property type="protein sequence ID" value="CAL96047.1"/>
    <property type="molecule type" value="Genomic_DNA"/>
</dbReference>
<dbReference type="RefSeq" id="WP_011767142.1">
    <property type="nucleotide sequence ID" value="NC_008702.1"/>
</dbReference>
<dbReference type="SMR" id="A1KB29"/>
<dbReference type="STRING" id="62928.azo3419"/>
<dbReference type="KEGG" id="aoa:dqs_3558"/>
<dbReference type="KEGG" id="aoa:dqs_3571"/>
<dbReference type="KEGG" id="azo:azo3419"/>
<dbReference type="KEGG" id="azo:azo3431"/>
<dbReference type="eggNOG" id="COG0050">
    <property type="taxonomic scope" value="Bacteria"/>
</dbReference>
<dbReference type="HOGENOM" id="CLU_007265_0_0_4"/>
<dbReference type="OrthoDB" id="9803139at2"/>
<dbReference type="Proteomes" id="UP000002588">
    <property type="component" value="Chromosome"/>
</dbReference>
<dbReference type="GO" id="GO:0005829">
    <property type="term" value="C:cytosol"/>
    <property type="evidence" value="ECO:0007669"/>
    <property type="project" value="TreeGrafter"/>
</dbReference>
<dbReference type="GO" id="GO:0005525">
    <property type="term" value="F:GTP binding"/>
    <property type="evidence" value="ECO:0007669"/>
    <property type="project" value="UniProtKB-UniRule"/>
</dbReference>
<dbReference type="GO" id="GO:0003924">
    <property type="term" value="F:GTPase activity"/>
    <property type="evidence" value="ECO:0007669"/>
    <property type="project" value="InterPro"/>
</dbReference>
<dbReference type="GO" id="GO:0097216">
    <property type="term" value="F:guanosine tetraphosphate binding"/>
    <property type="evidence" value="ECO:0007669"/>
    <property type="project" value="UniProtKB-ARBA"/>
</dbReference>
<dbReference type="GO" id="GO:0003746">
    <property type="term" value="F:translation elongation factor activity"/>
    <property type="evidence" value="ECO:0007669"/>
    <property type="project" value="UniProtKB-UniRule"/>
</dbReference>
<dbReference type="CDD" id="cd01884">
    <property type="entry name" value="EF_Tu"/>
    <property type="match status" value="1"/>
</dbReference>
<dbReference type="CDD" id="cd03697">
    <property type="entry name" value="EFTU_II"/>
    <property type="match status" value="1"/>
</dbReference>
<dbReference type="CDD" id="cd03707">
    <property type="entry name" value="EFTU_III"/>
    <property type="match status" value="1"/>
</dbReference>
<dbReference type="FunFam" id="2.40.30.10:FF:000001">
    <property type="entry name" value="Elongation factor Tu"/>
    <property type="match status" value="1"/>
</dbReference>
<dbReference type="FunFam" id="3.40.50.300:FF:000003">
    <property type="entry name" value="Elongation factor Tu"/>
    <property type="match status" value="1"/>
</dbReference>
<dbReference type="Gene3D" id="3.40.50.300">
    <property type="entry name" value="P-loop containing nucleotide triphosphate hydrolases"/>
    <property type="match status" value="1"/>
</dbReference>
<dbReference type="Gene3D" id="2.40.30.10">
    <property type="entry name" value="Translation factors"/>
    <property type="match status" value="2"/>
</dbReference>
<dbReference type="HAMAP" id="MF_00118_B">
    <property type="entry name" value="EF_Tu_B"/>
    <property type="match status" value="1"/>
</dbReference>
<dbReference type="InterPro" id="IPR041709">
    <property type="entry name" value="EF-Tu_GTP-bd"/>
</dbReference>
<dbReference type="InterPro" id="IPR050055">
    <property type="entry name" value="EF-Tu_GTPase"/>
</dbReference>
<dbReference type="InterPro" id="IPR004161">
    <property type="entry name" value="EFTu-like_2"/>
</dbReference>
<dbReference type="InterPro" id="IPR033720">
    <property type="entry name" value="EFTU_2"/>
</dbReference>
<dbReference type="InterPro" id="IPR031157">
    <property type="entry name" value="G_TR_CS"/>
</dbReference>
<dbReference type="InterPro" id="IPR027417">
    <property type="entry name" value="P-loop_NTPase"/>
</dbReference>
<dbReference type="InterPro" id="IPR005225">
    <property type="entry name" value="Small_GTP-bd"/>
</dbReference>
<dbReference type="InterPro" id="IPR000795">
    <property type="entry name" value="T_Tr_GTP-bd_dom"/>
</dbReference>
<dbReference type="InterPro" id="IPR009000">
    <property type="entry name" value="Transl_B-barrel_sf"/>
</dbReference>
<dbReference type="InterPro" id="IPR009001">
    <property type="entry name" value="Transl_elong_EF1A/Init_IF2_C"/>
</dbReference>
<dbReference type="InterPro" id="IPR004541">
    <property type="entry name" value="Transl_elong_EFTu/EF1A_bac/org"/>
</dbReference>
<dbReference type="InterPro" id="IPR004160">
    <property type="entry name" value="Transl_elong_EFTu/EF1A_C"/>
</dbReference>
<dbReference type="NCBIfam" id="TIGR00485">
    <property type="entry name" value="EF-Tu"/>
    <property type="match status" value="1"/>
</dbReference>
<dbReference type="NCBIfam" id="NF000766">
    <property type="entry name" value="PRK00049.1"/>
    <property type="match status" value="1"/>
</dbReference>
<dbReference type="NCBIfam" id="NF009372">
    <property type="entry name" value="PRK12735.1"/>
    <property type="match status" value="1"/>
</dbReference>
<dbReference type="NCBIfam" id="NF009373">
    <property type="entry name" value="PRK12736.1"/>
    <property type="match status" value="1"/>
</dbReference>
<dbReference type="NCBIfam" id="TIGR00231">
    <property type="entry name" value="small_GTP"/>
    <property type="match status" value="1"/>
</dbReference>
<dbReference type="PANTHER" id="PTHR43721:SF22">
    <property type="entry name" value="ELONGATION FACTOR TU, MITOCHONDRIAL"/>
    <property type="match status" value="1"/>
</dbReference>
<dbReference type="PANTHER" id="PTHR43721">
    <property type="entry name" value="ELONGATION FACTOR TU-RELATED"/>
    <property type="match status" value="1"/>
</dbReference>
<dbReference type="Pfam" id="PF00009">
    <property type="entry name" value="GTP_EFTU"/>
    <property type="match status" value="1"/>
</dbReference>
<dbReference type="Pfam" id="PF03144">
    <property type="entry name" value="GTP_EFTU_D2"/>
    <property type="match status" value="1"/>
</dbReference>
<dbReference type="Pfam" id="PF03143">
    <property type="entry name" value="GTP_EFTU_D3"/>
    <property type="match status" value="1"/>
</dbReference>
<dbReference type="PRINTS" id="PR00315">
    <property type="entry name" value="ELONGATNFCT"/>
</dbReference>
<dbReference type="SUPFAM" id="SSF50465">
    <property type="entry name" value="EF-Tu/eEF-1alpha/eIF2-gamma C-terminal domain"/>
    <property type="match status" value="1"/>
</dbReference>
<dbReference type="SUPFAM" id="SSF52540">
    <property type="entry name" value="P-loop containing nucleoside triphosphate hydrolases"/>
    <property type="match status" value="1"/>
</dbReference>
<dbReference type="SUPFAM" id="SSF50447">
    <property type="entry name" value="Translation proteins"/>
    <property type="match status" value="1"/>
</dbReference>
<dbReference type="PROSITE" id="PS00301">
    <property type="entry name" value="G_TR_1"/>
    <property type="match status" value="1"/>
</dbReference>
<dbReference type="PROSITE" id="PS51722">
    <property type="entry name" value="G_TR_2"/>
    <property type="match status" value="1"/>
</dbReference>
<keyword id="KW-0963">Cytoplasm</keyword>
<keyword id="KW-0251">Elongation factor</keyword>
<keyword id="KW-0342">GTP-binding</keyword>
<keyword id="KW-0378">Hydrolase</keyword>
<keyword id="KW-0460">Magnesium</keyword>
<keyword id="KW-0479">Metal-binding</keyword>
<keyword id="KW-0547">Nucleotide-binding</keyword>
<keyword id="KW-0648">Protein biosynthesis</keyword>
<keyword id="KW-1185">Reference proteome</keyword>
<proteinExistence type="inferred from homology"/>
<evidence type="ECO:0000250" key="1"/>
<evidence type="ECO:0000255" key="2">
    <source>
        <dbReference type="HAMAP-Rule" id="MF_00118"/>
    </source>
</evidence>
<accession>A1KB29</accession>
<feature type="chain" id="PRO_0000337317" description="Elongation factor Tu">
    <location>
        <begin position="1"/>
        <end position="396"/>
    </location>
</feature>
<feature type="domain" description="tr-type G">
    <location>
        <begin position="10"/>
        <end position="206"/>
    </location>
</feature>
<feature type="region of interest" description="G1" evidence="1">
    <location>
        <begin position="19"/>
        <end position="26"/>
    </location>
</feature>
<feature type="region of interest" description="G2" evidence="1">
    <location>
        <begin position="60"/>
        <end position="64"/>
    </location>
</feature>
<feature type="region of interest" description="G3" evidence="1">
    <location>
        <begin position="81"/>
        <end position="84"/>
    </location>
</feature>
<feature type="region of interest" description="G4" evidence="1">
    <location>
        <begin position="136"/>
        <end position="139"/>
    </location>
</feature>
<feature type="region of interest" description="G5" evidence="1">
    <location>
        <begin position="174"/>
        <end position="176"/>
    </location>
</feature>
<feature type="binding site" evidence="2">
    <location>
        <begin position="19"/>
        <end position="26"/>
    </location>
    <ligand>
        <name>GTP</name>
        <dbReference type="ChEBI" id="CHEBI:37565"/>
    </ligand>
</feature>
<feature type="binding site" evidence="2">
    <location>
        <position position="26"/>
    </location>
    <ligand>
        <name>Mg(2+)</name>
        <dbReference type="ChEBI" id="CHEBI:18420"/>
    </ligand>
</feature>
<feature type="binding site" evidence="2">
    <location>
        <begin position="81"/>
        <end position="85"/>
    </location>
    <ligand>
        <name>GTP</name>
        <dbReference type="ChEBI" id="CHEBI:37565"/>
    </ligand>
</feature>
<feature type="binding site" evidence="2">
    <location>
        <begin position="136"/>
        <end position="139"/>
    </location>
    <ligand>
        <name>GTP</name>
        <dbReference type="ChEBI" id="CHEBI:37565"/>
    </ligand>
</feature>
<comment type="function">
    <text evidence="2">GTP hydrolase that promotes the GTP-dependent binding of aminoacyl-tRNA to the A-site of ribosomes during protein biosynthesis.</text>
</comment>
<comment type="catalytic activity">
    <reaction evidence="2">
        <text>GTP + H2O = GDP + phosphate + H(+)</text>
        <dbReference type="Rhea" id="RHEA:19669"/>
        <dbReference type="ChEBI" id="CHEBI:15377"/>
        <dbReference type="ChEBI" id="CHEBI:15378"/>
        <dbReference type="ChEBI" id="CHEBI:37565"/>
        <dbReference type="ChEBI" id="CHEBI:43474"/>
        <dbReference type="ChEBI" id="CHEBI:58189"/>
        <dbReference type="EC" id="3.6.5.3"/>
    </reaction>
    <physiologicalReaction direction="left-to-right" evidence="2">
        <dbReference type="Rhea" id="RHEA:19670"/>
    </physiologicalReaction>
</comment>
<comment type="subunit">
    <text evidence="2">Monomer.</text>
</comment>
<comment type="subcellular location">
    <subcellularLocation>
        <location evidence="2">Cytoplasm</location>
    </subcellularLocation>
</comment>
<comment type="similarity">
    <text evidence="2">Belongs to the TRAFAC class translation factor GTPase superfamily. Classic translation factor GTPase family. EF-Tu/EF-1A subfamily.</text>
</comment>
<organism>
    <name type="scientific">Azoarcus sp. (strain BH72)</name>
    <dbReference type="NCBI Taxonomy" id="418699"/>
    <lineage>
        <taxon>Bacteria</taxon>
        <taxon>Pseudomonadati</taxon>
        <taxon>Pseudomonadota</taxon>
        <taxon>Betaproteobacteria</taxon>
        <taxon>Rhodocyclales</taxon>
        <taxon>Zoogloeaceae</taxon>
        <taxon>Azoarcus</taxon>
    </lineage>
</organism>
<reference key="1">
    <citation type="journal article" date="2006" name="Nat. Biotechnol.">
        <title>Complete genome of the mutualistic, N2-fixing grass endophyte Azoarcus sp. strain BH72.</title>
        <authorList>
            <person name="Krause A."/>
            <person name="Ramakumar A."/>
            <person name="Bartels D."/>
            <person name="Battistoni F."/>
            <person name="Bekel T."/>
            <person name="Boch J."/>
            <person name="Boehm M."/>
            <person name="Friedrich F."/>
            <person name="Hurek T."/>
            <person name="Krause L."/>
            <person name="Linke B."/>
            <person name="McHardy A.C."/>
            <person name="Sarkar A."/>
            <person name="Schneiker S."/>
            <person name="Syed A.A."/>
            <person name="Thauer R."/>
            <person name="Vorhoelter F.-J."/>
            <person name="Weidner S."/>
            <person name="Puehler A."/>
            <person name="Reinhold-Hurek B."/>
            <person name="Kaiser O."/>
            <person name="Goesmann A."/>
        </authorList>
    </citation>
    <scope>NUCLEOTIDE SEQUENCE [LARGE SCALE GENOMIC DNA]</scope>
    <source>
        <strain>BH72</strain>
    </source>
</reference>
<gene>
    <name evidence="2" type="primary">tuf1</name>
    <name type="synonym">tufA</name>
    <name type="ordered locus">azo3419</name>
</gene>
<gene>
    <name evidence="2" type="primary">tuf2</name>
    <name type="synonym">tufB</name>
    <name type="ordered locus">azo3431</name>
</gene>
<name>EFTU_AZOSB</name>
<sequence>MAKGKFERTKPHVNVGTIGHVDHGKTTLTAAITTILSKKFGGEAKAYDQIDAAPEEKARGITINTAHVEYETATRHYAHVDCPGHADYVKNMITGAAQMDGAILVCSAADGPMPQTREHILLARQVGVPYIIVFLNKCDMVDDEELLELVEMEVRELLSKYDFPGDDIPIVKGSALKALEGDQSDIGEPAIFRLADALDSYIPTPERAIDKPFLLPIEDVFSISGRGTVVTGRVERGIVKVGEEIEIVGIKPTVKTTCTGVEMFRKLLDQGQAGDNVGVLLRGTKREDVERGQVLCKPGSITPHTHFTGEIYVLSKEEGGRHTPFFNNYRPQFYFRTTDVTGSISLPEGTEMVMPGDNVSITVKLIAPIAMEEGLRFAIREGGRTVGAGVVAKIIE</sequence>
<protein>
    <recommendedName>
        <fullName evidence="2">Elongation factor Tu</fullName>
        <shortName evidence="2">EF-Tu</shortName>
        <ecNumber evidence="2">3.6.5.3</ecNumber>
    </recommendedName>
</protein>